<gene>
    <name evidence="1" type="primary">dapE</name>
    <name type="ordered locus">BB2182</name>
</gene>
<evidence type="ECO:0000255" key="1">
    <source>
        <dbReference type="HAMAP-Rule" id="MF_01690"/>
    </source>
</evidence>
<name>DAPE_BORBR</name>
<feature type="chain" id="PRO_0000375477" description="Succinyl-diaminopimelate desuccinylase">
    <location>
        <begin position="1"/>
        <end position="379"/>
    </location>
</feature>
<feature type="active site" evidence="1">
    <location>
        <position position="70"/>
    </location>
</feature>
<feature type="active site" description="Proton acceptor" evidence="1">
    <location>
        <position position="135"/>
    </location>
</feature>
<feature type="binding site" evidence="1">
    <location>
        <position position="68"/>
    </location>
    <ligand>
        <name>Zn(2+)</name>
        <dbReference type="ChEBI" id="CHEBI:29105"/>
        <label>1</label>
    </ligand>
</feature>
<feature type="binding site" evidence="1">
    <location>
        <position position="101"/>
    </location>
    <ligand>
        <name>Zn(2+)</name>
        <dbReference type="ChEBI" id="CHEBI:29105"/>
        <label>1</label>
    </ligand>
</feature>
<feature type="binding site" evidence="1">
    <location>
        <position position="101"/>
    </location>
    <ligand>
        <name>Zn(2+)</name>
        <dbReference type="ChEBI" id="CHEBI:29105"/>
        <label>2</label>
    </ligand>
</feature>
<feature type="binding site" evidence="1">
    <location>
        <position position="136"/>
    </location>
    <ligand>
        <name>Zn(2+)</name>
        <dbReference type="ChEBI" id="CHEBI:29105"/>
        <label>2</label>
    </ligand>
</feature>
<feature type="binding site" evidence="1">
    <location>
        <position position="164"/>
    </location>
    <ligand>
        <name>Zn(2+)</name>
        <dbReference type="ChEBI" id="CHEBI:29105"/>
        <label>1</label>
    </ligand>
</feature>
<feature type="binding site" evidence="1">
    <location>
        <position position="350"/>
    </location>
    <ligand>
        <name>Zn(2+)</name>
        <dbReference type="ChEBI" id="CHEBI:29105"/>
        <label>2</label>
    </ligand>
</feature>
<reference key="1">
    <citation type="journal article" date="2003" name="Nat. Genet.">
        <title>Comparative analysis of the genome sequences of Bordetella pertussis, Bordetella parapertussis and Bordetella bronchiseptica.</title>
        <authorList>
            <person name="Parkhill J."/>
            <person name="Sebaihia M."/>
            <person name="Preston A."/>
            <person name="Murphy L.D."/>
            <person name="Thomson N.R."/>
            <person name="Harris D.E."/>
            <person name="Holden M.T.G."/>
            <person name="Churcher C.M."/>
            <person name="Bentley S.D."/>
            <person name="Mungall K.L."/>
            <person name="Cerdeno-Tarraga A.-M."/>
            <person name="Temple L."/>
            <person name="James K.D."/>
            <person name="Harris B."/>
            <person name="Quail M.A."/>
            <person name="Achtman M."/>
            <person name="Atkin R."/>
            <person name="Baker S."/>
            <person name="Basham D."/>
            <person name="Bason N."/>
            <person name="Cherevach I."/>
            <person name="Chillingworth T."/>
            <person name="Collins M."/>
            <person name="Cronin A."/>
            <person name="Davis P."/>
            <person name="Doggett J."/>
            <person name="Feltwell T."/>
            <person name="Goble A."/>
            <person name="Hamlin N."/>
            <person name="Hauser H."/>
            <person name="Holroyd S."/>
            <person name="Jagels K."/>
            <person name="Leather S."/>
            <person name="Moule S."/>
            <person name="Norberczak H."/>
            <person name="O'Neil S."/>
            <person name="Ormond D."/>
            <person name="Price C."/>
            <person name="Rabbinowitsch E."/>
            <person name="Rutter S."/>
            <person name="Sanders M."/>
            <person name="Saunders D."/>
            <person name="Seeger K."/>
            <person name="Sharp S."/>
            <person name="Simmonds M."/>
            <person name="Skelton J."/>
            <person name="Squares R."/>
            <person name="Squares S."/>
            <person name="Stevens K."/>
            <person name="Unwin L."/>
            <person name="Whitehead S."/>
            <person name="Barrell B.G."/>
            <person name="Maskell D.J."/>
        </authorList>
    </citation>
    <scope>NUCLEOTIDE SEQUENCE [LARGE SCALE GENOMIC DNA]</scope>
    <source>
        <strain>ATCC BAA-588 / NCTC 13252 / RB50</strain>
    </source>
</reference>
<comment type="function">
    <text evidence="1">Catalyzes the hydrolysis of N-succinyl-L,L-diaminopimelic acid (SDAP), forming succinate and LL-2,6-diaminopimelate (DAP), an intermediate involved in the bacterial biosynthesis of lysine and meso-diaminopimelic acid, an essential component of bacterial cell walls.</text>
</comment>
<comment type="catalytic activity">
    <reaction evidence="1">
        <text>N-succinyl-(2S,6S)-2,6-diaminopimelate + H2O = (2S,6S)-2,6-diaminopimelate + succinate</text>
        <dbReference type="Rhea" id="RHEA:22608"/>
        <dbReference type="ChEBI" id="CHEBI:15377"/>
        <dbReference type="ChEBI" id="CHEBI:30031"/>
        <dbReference type="ChEBI" id="CHEBI:57609"/>
        <dbReference type="ChEBI" id="CHEBI:58087"/>
        <dbReference type="EC" id="3.5.1.18"/>
    </reaction>
</comment>
<comment type="cofactor">
    <cofactor evidence="1">
        <name>Zn(2+)</name>
        <dbReference type="ChEBI" id="CHEBI:29105"/>
    </cofactor>
    <cofactor evidence="1">
        <name>Co(2+)</name>
        <dbReference type="ChEBI" id="CHEBI:48828"/>
    </cofactor>
    <text evidence="1">Binds 2 Zn(2+) or Co(2+) ions per subunit.</text>
</comment>
<comment type="pathway">
    <text evidence="1">Amino-acid biosynthesis; L-lysine biosynthesis via DAP pathway; LL-2,6-diaminopimelate from (S)-tetrahydrodipicolinate (succinylase route): step 3/3.</text>
</comment>
<comment type="subunit">
    <text evidence="1">Homodimer.</text>
</comment>
<comment type="similarity">
    <text evidence="1">Belongs to the peptidase M20A family. DapE subfamily.</text>
</comment>
<proteinExistence type="inferred from homology"/>
<protein>
    <recommendedName>
        <fullName evidence="1">Succinyl-diaminopimelate desuccinylase</fullName>
        <shortName evidence="1">SDAP desuccinylase</shortName>
        <ecNumber evidence="1">3.5.1.18</ecNumber>
    </recommendedName>
    <alternativeName>
        <fullName evidence="1">N-succinyl-LL-2,6-diaminoheptanedioate amidohydrolase</fullName>
    </alternativeName>
</protein>
<keyword id="KW-0028">Amino-acid biosynthesis</keyword>
<keyword id="KW-0170">Cobalt</keyword>
<keyword id="KW-0220">Diaminopimelate biosynthesis</keyword>
<keyword id="KW-0378">Hydrolase</keyword>
<keyword id="KW-0457">Lysine biosynthesis</keyword>
<keyword id="KW-0479">Metal-binding</keyword>
<keyword id="KW-0862">Zinc</keyword>
<organism>
    <name type="scientific">Bordetella bronchiseptica (strain ATCC BAA-588 / NCTC 13252 / RB50)</name>
    <name type="common">Alcaligenes bronchisepticus</name>
    <dbReference type="NCBI Taxonomy" id="257310"/>
    <lineage>
        <taxon>Bacteria</taxon>
        <taxon>Pseudomonadati</taxon>
        <taxon>Pseudomonadota</taxon>
        <taxon>Betaproteobacteria</taxon>
        <taxon>Burkholderiales</taxon>
        <taxon>Alcaligenaceae</taxon>
        <taxon>Bordetella</taxon>
    </lineage>
</organism>
<sequence length="379" mass="40794">MTASAVLDLVKDLIARPSVTPDDVDCQMLLAQRLERIGFQCETIARGGVTNLWARRGAGAPLTVFAGHTDVVPPGPRDKWDSDPFVPTERDGFLYGRGAADMKSSIAAFVVAAEEFVAAHPEHPGSIALLITSDEEGPAVDGTVIVCDELRQRGEQLDYCIVGEPTSTEALGDVCKNGRRGSLSGRLLVKGVQGHVAYPHLARNPVHQLAPALTELVAIEWDQGNEYFPPTTFQVSNLHAGTGATNVVPGEAVALFNFRFSTASTPGQLKARVHEVLDRHGLEYQLDWELGGEPFLTPRGSLTDALVSAIQAETGLQAELSTTGGTSDGRFIARICPQVIEFGPCNATIHKVNERIELSSLAPLKNIYRRTLENLLLAD</sequence>
<accession>Q7WKC6</accession>
<dbReference type="EC" id="3.5.1.18" evidence="1"/>
<dbReference type="EMBL" id="BX640443">
    <property type="protein sequence ID" value="CAE32678.1"/>
    <property type="molecule type" value="Genomic_DNA"/>
</dbReference>
<dbReference type="RefSeq" id="WP_003812538.1">
    <property type="nucleotide sequence ID" value="NC_002927.3"/>
</dbReference>
<dbReference type="SMR" id="Q7WKC6"/>
<dbReference type="GeneID" id="56478356"/>
<dbReference type="KEGG" id="bbr:BB2182"/>
<dbReference type="eggNOG" id="COG0624">
    <property type="taxonomic scope" value="Bacteria"/>
</dbReference>
<dbReference type="HOGENOM" id="CLU_021802_4_0_4"/>
<dbReference type="UniPathway" id="UPA00034">
    <property type="reaction ID" value="UER00021"/>
</dbReference>
<dbReference type="Proteomes" id="UP000001027">
    <property type="component" value="Chromosome"/>
</dbReference>
<dbReference type="GO" id="GO:0008777">
    <property type="term" value="F:acetylornithine deacetylase activity"/>
    <property type="evidence" value="ECO:0007669"/>
    <property type="project" value="TreeGrafter"/>
</dbReference>
<dbReference type="GO" id="GO:0050897">
    <property type="term" value="F:cobalt ion binding"/>
    <property type="evidence" value="ECO:0007669"/>
    <property type="project" value="UniProtKB-UniRule"/>
</dbReference>
<dbReference type="GO" id="GO:0009014">
    <property type="term" value="F:succinyl-diaminopimelate desuccinylase activity"/>
    <property type="evidence" value="ECO:0007669"/>
    <property type="project" value="UniProtKB-UniRule"/>
</dbReference>
<dbReference type="GO" id="GO:0008270">
    <property type="term" value="F:zinc ion binding"/>
    <property type="evidence" value="ECO:0007669"/>
    <property type="project" value="UniProtKB-UniRule"/>
</dbReference>
<dbReference type="GO" id="GO:0019877">
    <property type="term" value="P:diaminopimelate biosynthetic process"/>
    <property type="evidence" value="ECO:0007669"/>
    <property type="project" value="UniProtKB-UniRule"/>
</dbReference>
<dbReference type="GO" id="GO:0006526">
    <property type="term" value="P:L-arginine biosynthetic process"/>
    <property type="evidence" value="ECO:0007669"/>
    <property type="project" value="TreeGrafter"/>
</dbReference>
<dbReference type="GO" id="GO:0009089">
    <property type="term" value="P:lysine biosynthetic process via diaminopimelate"/>
    <property type="evidence" value="ECO:0007669"/>
    <property type="project" value="UniProtKB-UniRule"/>
</dbReference>
<dbReference type="CDD" id="cd03891">
    <property type="entry name" value="M20_DapE_proteobac"/>
    <property type="match status" value="1"/>
</dbReference>
<dbReference type="FunFam" id="3.30.70.360:FF:000011">
    <property type="entry name" value="Succinyl-diaminopimelate desuccinylase"/>
    <property type="match status" value="1"/>
</dbReference>
<dbReference type="FunFam" id="3.40.630.10:FF:000005">
    <property type="entry name" value="Succinyl-diaminopimelate desuccinylase"/>
    <property type="match status" value="1"/>
</dbReference>
<dbReference type="Gene3D" id="1.10.150.900">
    <property type="match status" value="1"/>
</dbReference>
<dbReference type="Gene3D" id="3.30.70.360">
    <property type="match status" value="1"/>
</dbReference>
<dbReference type="Gene3D" id="3.40.630.10">
    <property type="entry name" value="Zn peptidases"/>
    <property type="match status" value="1"/>
</dbReference>
<dbReference type="HAMAP" id="MF_01690">
    <property type="entry name" value="DapE"/>
    <property type="match status" value="1"/>
</dbReference>
<dbReference type="InterPro" id="IPR036264">
    <property type="entry name" value="Bact_exopeptidase_dim_dom"/>
</dbReference>
<dbReference type="InterPro" id="IPR005941">
    <property type="entry name" value="DapE_proteobac"/>
</dbReference>
<dbReference type="InterPro" id="IPR002933">
    <property type="entry name" value="Peptidase_M20"/>
</dbReference>
<dbReference type="InterPro" id="IPR011650">
    <property type="entry name" value="Peptidase_M20_dimer"/>
</dbReference>
<dbReference type="InterPro" id="IPR050072">
    <property type="entry name" value="Peptidase_M20A"/>
</dbReference>
<dbReference type="NCBIfam" id="TIGR01246">
    <property type="entry name" value="dapE_proteo"/>
    <property type="match status" value="1"/>
</dbReference>
<dbReference type="NCBIfam" id="NF009557">
    <property type="entry name" value="PRK13009.1"/>
    <property type="match status" value="1"/>
</dbReference>
<dbReference type="PANTHER" id="PTHR43808">
    <property type="entry name" value="ACETYLORNITHINE DEACETYLASE"/>
    <property type="match status" value="1"/>
</dbReference>
<dbReference type="PANTHER" id="PTHR43808:SF31">
    <property type="entry name" value="N-ACETYL-L-CITRULLINE DEACETYLASE"/>
    <property type="match status" value="1"/>
</dbReference>
<dbReference type="Pfam" id="PF07687">
    <property type="entry name" value="M20_dimer"/>
    <property type="match status" value="1"/>
</dbReference>
<dbReference type="Pfam" id="PF01546">
    <property type="entry name" value="Peptidase_M20"/>
    <property type="match status" value="1"/>
</dbReference>
<dbReference type="SUPFAM" id="SSF55031">
    <property type="entry name" value="Bacterial exopeptidase dimerisation domain"/>
    <property type="match status" value="1"/>
</dbReference>
<dbReference type="SUPFAM" id="SSF53187">
    <property type="entry name" value="Zn-dependent exopeptidases"/>
    <property type="match status" value="1"/>
</dbReference>
<dbReference type="PROSITE" id="PS00759">
    <property type="entry name" value="ARGE_DAPE_CPG2_2"/>
    <property type="match status" value="1"/>
</dbReference>